<comment type="function">
    <text evidence="1">Allows the formation of correctly charged Gln-tRNA(Gln) through the transamidation of misacylated Glu-tRNA(Gln) in organisms which lack glutaminyl-tRNA synthetase. The reaction takes place in the presence of glutamine and ATP through an activated gamma-phospho-Glu-tRNA(Gln).</text>
</comment>
<comment type="catalytic activity">
    <reaction evidence="1">
        <text>L-glutamyl-tRNA(Gln) + L-glutamine + ATP + H2O = L-glutaminyl-tRNA(Gln) + L-glutamate + ADP + phosphate + H(+)</text>
        <dbReference type="Rhea" id="RHEA:17521"/>
        <dbReference type="Rhea" id="RHEA-COMP:9681"/>
        <dbReference type="Rhea" id="RHEA-COMP:9684"/>
        <dbReference type="ChEBI" id="CHEBI:15377"/>
        <dbReference type="ChEBI" id="CHEBI:15378"/>
        <dbReference type="ChEBI" id="CHEBI:29985"/>
        <dbReference type="ChEBI" id="CHEBI:30616"/>
        <dbReference type="ChEBI" id="CHEBI:43474"/>
        <dbReference type="ChEBI" id="CHEBI:58359"/>
        <dbReference type="ChEBI" id="CHEBI:78520"/>
        <dbReference type="ChEBI" id="CHEBI:78521"/>
        <dbReference type="ChEBI" id="CHEBI:456216"/>
        <dbReference type="EC" id="6.3.5.7"/>
    </reaction>
</comment>
<comment type="subunit">
    <text evidence="1">Heterotrimer of A, B and C subunits.</text>
</comment>
<comment type="similarity">
    <text evidence="1">Belongs to the amidase family. GatA subfamily.</text>
</comment>
<evidence type="ECO:0000255" key="1">
    <source>
        <dbReference type="HAMAP-Rule" id="MF_00120"/>
    </source>
</evidence>
<evidence type="ECO:0000256" key="2">
    <source>
        <dbReference type="SAM" id="MobiDB-lite"/>
    </source>
</evidence>
<keyword id="KW-0067">ATP-binding</keyword>
<keyword id="KW-0436">Ligase</keyword>
<keyword id="KW-0547">Nucleotide-binding</keyword>
<keyword id="KW-0648">Protein biosynthesis</keyword>
<keyword id="KW-1185">Reference proteome</keyword>
<name>GATA_LACE2</name>
<gene>
    <name evidence="1" type="primary">gatA</name>
    <name type="ordered locus">EUBELI_00447</name>
</gene>
<proteinExistence type="inferred from homology"/>
<protein>
    <recommendedName>
        <fullName evidence="1">Glutamyl-tRNA(Gln) amidotransferase subunit A</fullName>
        <shortName evidence="1">Glu-ADT subunit A</shortName>
        <ecNumber evidence="1">6.3.5.7</ecNumber>
    </recommendedName>
</protein>
<sequence length="481" mass="51313">MSLLDYTAVELAAKIKAGETTATEAMEAVIAQIEKSEDELNCYVTFDKEKALAAAKKADEDIKAGKLTGPLAGVPFAIKDNMCTEGMLTTCSSKILGNFVPTYTADAVERLQNAGAVIIGKTNMDEFAMGSTTETSAFGATKNPRNPEHVPGGSSGGSAAAVAANECFAALGSDTGGSIRQPASYCGVVGLKPTYGTVSRYGLIAYGSSLDQIGPLCKDVTDCATIMEAIAGKDDKDSTSIGRDDYSFTNALVDDVKGMKIGIPRDYFGEGLDPEVKEAVLNAAKVLESKGAIVEEFDLSLVEYAIPTYYTIAAAEASSNLERFDGVKYGYRTKEYEGLHNMYKKTRSEGFGPEVKRRIMLGSFVLSSGYYDAYYLKALRVKALIKKAFDEAFAKYDVILGPVAPTTAPKLGSSLSDPIKMYLGDIYTISVNLAGLPGLSVPCGKDKNGLPIGLQLIGDCFKENNIIRAGYAYEQARGRFE</sequence>
<accession>C4Z3J4</accession>
<organism>
    <name type="scientific">Lachnospira eligens (strain ATCC 27750 / DSM 3376 / VPI C15-48 / C15-B4)</name>
    <name type="common">Eubacterium eligens</name>
    <dbReference type="NCBI Taxonomy" id="515620"/>
    <lineage>
        <taxon>Bacteria</taxon>
        <taxon>Bacillati</taxon>
        <taxon>Bacillota</taxon>
        <taxon>Clostridia</taxon>
        <taxon>Lachnospirales</taxon>
        <taxon>Lachnospiraceae</taxon>
        <taxon>Lachnospira</taxon>
    </lineage>
</organism>
<reference key="1">
    <citation type="journal article" date="2009" name="Proc. Natl. Acad. Sci. U.S.A.">
        <title>Characterizing a model human gut microbiota composed of members of its two dominant bacterial phyla.</title>
        <authorList>
            <person name="Mahowald M.A."/>
            <person name="Rey F.E."/>
            <person name="Seedorf H."/>
            <person name="Turnbaugh P.J."/>
            <person name="Fulton R.S."/>
            <person name="Wollam A."/>
            <person name="Shah N."/>
            <person name="Wang C."/>
            <person name="Magrini V."/>
            <person name="Wilson R.K."/>
            <person name="Cantarel B.L."/>
            <person name="Coutinho P.M."/>
            <person name="Henrissat B."/>
            <person name="Crock L.W."/>
            <person name="Russell A."/>
            <person name="Verberkmoes N.C."/>
            <person name="Hettich R.L."/>
            <person name="Gordon J.I."/>
        </authorList>
    </citation>
    <scope>NUCLEOTIDE SEQUENCE [LARGE SCALE GENOMIC DNA]</scope>
    <source>
        <strain>ATCC 27750 / DSM 3376 / VPI C15-48 / C15-B4</strain>
    </source>
</reference>
<feature type="chain" id="PRO_1000203034" description="Glutamyl-tRNA(Gln) amidotransferase subunit A">
    <location>
        <begin position="1"/>
        <end position="481"/>
    </location>
</feature>
<feature type="region of interest" description="Disordered" evidence="2">
    <location>
        <begin position="136"/>
        <end position="157"/>
    </location>
</feature>
<feature type="active site" description="Charge relay system" evidence="1">
    <location>
        <position position="79"/>
    </location>
</feature>
<feature type="active site" description="Charge relay system" evidence="1">
    <location>
        <position position="154"/>
    </location>
</feature>
<feature type="active site" description="Acyl-ester intermediate" evidence="1">
    <location>
        <position position="178"/>
    </location>
</feature>
<dbReference type="EC" id="6.3.5.7" evidence="1"/>
<dbReference type="EMBL" id="CP001104">
    <property type="protein sequence ID" value="ACR71463.1"/>
    <property type="molecule type" value="Genomic_DNA"/>
</dbReference>
<dbReference type="RefSeq" id="WP_012738699.1">
    <property type="nucleotide sequence ID" value="NC_012778.1"/>
</dbReference>
<dbReference type="SMR" id="C4Z3J4"/>
<dbReference type="STRING" id="515620.EUBELI_00447"/>
<dbReference type="GeneID" id="41355211"/>
<dbReference type="KEGG" id="eel:EUBELI_00447"/>
<dbReference type="eggNOG" id="COG0154">
    <property type="taxonomic scope" value="Bacteria"/>
</dbReference>
<dbReference type="HOGENOM" id="CLU_009600_0_3_9"/>
<dbReference type="Proteomes" id="UP000001476">
    <property type="component" value="Chromosome"/>
</dbReference>
<dbReference type="GO" id="GO:0030956">
    <property type="term" value="C:glutamyl-tRNA(Gln) amidotransferase complex"/>
    <property type="evidence" value="ECO:0007669"/>
    <property type="project" value="InterPro"/>
</dbReference>
<dbReference type="GO" id="GO:0005524">
    <property type="term" value="F:ATP binding"/>
    <property type="evidence" value="ECO:0007669"/>
    <property type="project" value="UniProtKB-KW"/>
</dbReference>
<dbReference type="GO" id="GO:0050567">
    <property type="term" value="F:glutaminyl-tRNA synthase (glutamine-hydrolyzing) activity"/>
    <property type="evidence" value="ECO:0007669"/>
    <property type="project" value="UniProtKB-UniRule"/>
</dbReference>
<dbReference type="GO" id="GO:0006412">
    <property type="term" value="P:translation"/>
    <property type="evidence" value="ECO:0007669"/>
    <property type="project" value="UniProtKB-UniRule"/>
</dbReference>
<dbReference type="Gene3D" id="3.90.1300.10">
    <property type="entry name" value="Amidase signature (AS) domain"/>
    <property type="match status" value="1"/>
</dbReference>
<dbReference type="HAMAP" id="MF_00120">
    <property type="entry name" value="GatA"/>
    <property type="match status" value="1"/>
</dbReference>
<dbReference type="InterPro" id="IPR000120">
    <property type="entry name" value="Amidase"/>
</dbReference>
<dbReference type="InterPro" id="IPR020556">
    <property type="entry name" value="Amidase_CS"/>
</dbReference>
<dbReference type="InterPro" id="IPR023631">
    <property type="entry name" value="Amidase_dom"/>
</dbReference>
<dbReference type="InterPro" id="IPR036928">
    <property type="entry name" value="AS_sf"/>
</dbReference>
<dbReference type="InterPro" id="IPR004412">
    <property type="entry name" value="GatA"/>
</dbReference>
<dbReference type="NCBIfam" id="TIGR00132">
    <property type="entry name" value="gatA"/>
    <property type="match status" value="1"/>
</dbReference>
<dbReference type="PANTHER" id="PTHR11895:SF151">
    <property type="entry name" value="GLUTAMYL-TRNA(GLN) AMIDOTRANSFERASE SUBUNIT A"/>
    <property type="match status" value="1"/>
</dbReference>
<dbReference type="PANTHER" id="PTHR11895">
    <property type="entry name" value="TRANSAMIDASE"/>
    <property type="match status" value="1"/>
</dbReference>
<dbReference type="Pfam" id="PF01425">
    <property type="entry name" value="Amidase"/>
    <property type="match status" value="1"/>
</dbReference>
<dbReference type="SUPFAM" id="SSF75304">
    <property type="entry name" value="Amidase signature (AS) enzymes"/>
    <property type="match status" value="1"/>
</dbReference>
<dbReference type="PROSITE" id="PS00571">
    <property type="entry name" value="AMIDASES"/>
    <property type="match status" value="1"/>
</dbReference>